<proteinExistence type="inferred from homology"/>
<evidence type="ECO:0000255" key="1">
    <source>
        <dbReference type="HAMAP-Rule" id="MF_01025"/>
    </source>
</evidence>
<sequence length="519" mass="56792">MNTSISSQPPCIRIFDTTLRDGEQSPGCSMPAQQKLVMARALDALGVDIIETGFPASSQSDYEAMTLIARELRRPTLAVLSRCLQADIETSARALESATKPRLHVFLSTSPLHREHKLRMSKEQVLESVHKHVSLSRTLIDDVEFSAEDATRTEEDFLIEVTRVAIAAGATTINLPDTVGFSTPEEIRNMFTRVIANVEGANKVIFSAHCHDDLGLAVANSLAAIEGGARQIECTINGIGERAGNCALEELTMVLKVRNAFYNIDTSIHTSRIVSTSQLLQRLVGMPVQRNKAVVGANAFAHESGIHQHGMLRHRGTYEIMRPQEVGWVCSHMVLGRHSGRAAVEQRLRALGYLLEEEDLKLVFEEFKQLCEKQRLVTDVDLQVLMQDTTVQHGYRLASMTISDVGNRANALVELSDPQGQRVAETAQGNGPVDALFGALAAATGVKLELDSYQVHSVGIGADARGEANLSVRHNDTQYEGTGTSKDIIEASALAWLEVANRLLRNPENMQNKQNTALA</sequence>
<dbReference type="EC" id="2.3.3.13" evidence="1"/>
<dbReference type="EMBL" id="CP001011">
    <property type="protein sequence ID" value="ACB92539.1"/>
    <property type="molecule type" value="Genomic_DNA"/>
</dbReference>
<dbReference type="RefSeq" id="WP_011097913.1">
    <property type="nucleotide sequence ID" value="NC_010577.1"/>
</dbReference>
<dbReference type="SMR" id="B2I596"/>
<dbReference type="KEGG" id="xfn:XfasM23_1111"/>
<dbReference type="HOGENOM" id="CLU_022158_0_1_6"/>
<dbReference type="UniPathway" id="UPA00048">
    <property type="reaction ID" value="UER00070"/>
</dbReference>
<dbReference type="Proteomes" id="UP000001698">
    <property type="component" value="Chromosome"/>
</dbReference>
<dbReference type="GO" id="GO:0005829">
    <property type="term" value="C:cytosol"/>
    <property type="evidence" value="ECO:0007669"/>
    <property type="project" value="TreeGrafter"/>
</dbReference>
<dbReference type="GO" id="GO:0003852">
    <property type="term" value="F:2-isopropylmalate synthase activity"/>
    <property type="evidence" value="ECO:0007669"/>
    <property type="project" value="UniProtKB-UniRule"/>
</dbReference>
<dbReference type="GO" id="GO:0003985">
    <property type="term" value="F:acetyl-CoA C-acetyltransferase activity"/>
    <property type="evidence" value="ECO:0007669"/>
    <property type="project" value="UniProtKB-UniRule"/>
</dbReference>
<dbReference type="GO" id="GO:0030145">
    <property type="term" value="F:manganese ion binding"/>
    <property type="evidence" value="ECO:0007669"/>
    <property type="project" value="UniProtKB-UniRule"/>
</dbReference>
<dbReference type="GO" id="GO:0009098">
    <property type="term" value="P:L-leucine biosynthetic process"/>
    <property type="evidence" value="ECO:0007669"/>
    <property type="project" value="UniProtKB-UniRule"/>
</dbReference>
<dbReference type="CDD" id="cd07940">
    <property type="entry name" value="DRE_TIM_IPMS"/>
    <property type="match status" value="1"/>
</dbReference>
<dbReference type="FunFam" id="3.20.20.70:FF:000010">
    <property type="entry name" value="2-isopropylmalate synthase"/>
    <property type="match status" value="1"/>
</dbReference>
<dbReference type="FunFam" id="3.30.160.270:FF:000003">
    <property type="entry name" value="2-isopropylmalate synthase"/>
    <property type="match status" value="1"/>
</dbReference>
<dbReference type="Gene3D" id="3.30.160.270">
    <property type="match status" value="1"/>
</dbReference>
<dbReference type="Gene3D" id="3.20.20.70">
    <property type="entry name" value="Aldolase class I"/>
    <property type="match status" value="1"/>
</dbReference>
<dbReference type="HAMAP" id="MF_01025">
    <property type="entry name" value="LeuA_type1"/>
    <property type="match status" value="1"/>
</dbReference>
<dbReference type="InterPro" id="IPR050073">
    <property type="entry name" value="2-IPM_HCS-like"/>
</dbReference>
<dbReference type="InterPro" id="IPR013709">
    <property type="entry name" value="2-isopropylmalate_synth_dimer"/>
</dbReference>
<dbReference type="InterPro" id="IPR002034">
    <property type="entry name" value="AIPM/Hcit_synth_CS"/>
</dbReference>
<dbReference type="InterPro" id="IPR013785">
    <property type="entry name" value="Aldolase_TIM"/>
</dbReference>
<dbReference type="InterPro" id="IPR054691">
    <property type="entry name" value="LeuA/HCS_post-cat"/>
</dbReference>
<dbReference type="InterPro" id="IPR036230">
    <property type="entry name" value="LeuA_allosteric_dom_sf"/>
</dbReference>
<dbReference type="InterPro" id="IPR005671">
    <property type="entry name" value="LeuA_bact_synth"/>
</dbReference>
<dbReference type="InterPro" id="IPR000891">
    <property type="entry name" value="PYR_CT"/>
</dbReference>
<dbReference type="NCBIfam" id="TIGR00973">
    <property type="entry name" value="leuA_bact"/>
    <property type="match status" value="1"/>
</dbReference>
<dbReference type="NCBIfam" id="NF002086">
    <property type="entry name" value="PRK00915.1-3"/>
    <property type="match status" value="1"/>
</dbReference>
<dbReference type="PANTHER" id="PTHR10277:SF9">
    <property type="entry name" value="2-ISOPROPYLMALATE SYNTHASE 1, CHLOROPLASTIC-RELATED"/>
    <property type="match status" value="1"/>
</dbReference>
<dbReference type="PANTHER" id="PTHR10277">
    <property type="entry name" value="HOMOCITRATE SYNTHASE-RELATED"/>
    <property type="match status" value="1"/>
</dbReference>
<dbReference type="Pfam" id="PF22617">
    <property type="entry name" value="HCS_D2"/>
    <property type="match status" value="1"/>
</dbReference>
<dbReference type="Pfam" id="PF00682">
    <property type="entry name" value="HMGL-like"/>
    <property type="match status" value="1"/>
</dbReference>
<dbReference type="Pfam" id="PF08502">
    <property type="entry name" value="LeuA_dimer"/>
    <property type="match status" value="1"/>
</dbReference>
<dbReference type="SMART" id="SM00917">
    <property type="entry name" value="LeuA_dimer"/>
    <property type="match status" value="1"/>
</dbReference>
<dbReference type="SUPFAM" id="SSF110921">
    <property type="entry name" value="2-isopropylmalate synthase LeuA, allosteric (dimerisation) domain"/>
    <property type="match status" value="1"/>
</dbReference>
<dbReference type="SUPFAM" id="SSF51569">
    <property type="entry name" value="Aldolase"/>
    <property type="match status" value="1"/>
</dbReference>
<dbReference type="PROSITE" id="PS00815">
    <property type="entry name" value="AIPM_HOMOCIT_SYNTH_1"/>
    <property type="match status" value="1"/>
</dbReference>
<dbReference type="PROSITE" id="PS00816">
    <property type="entry name" value="AIPM_HOMOCIT_SYNTH_2"/>
    <property type="match status" value="1"/>
</dbReference>
<dbReference type="PROSITE" id="PS50991">
    <property type="entry name" value="PYR_CT"/>
    <property type="match status" value="1"/>
</dbReference>
<protein>
    <recommendedName>
        <fullName evidence="1">2-isopropylmalate synthase</fullName>
        <ecNumber evidence="1">2.3.3.13</ecNumber>
    </recommendedName>
    <alternativeName>
        <fullName evidence="1">Alpha-IPM synthase</fullName>
    </alternativeName>
    <alternativeName>
        <fullName evidence="1">Alpha-isopropylmalate synthase</fullName>
    </alternativeName>
</protein>
<gene>
    <name evidence="1" type="primary">leuA</name>
    <name type="ordered locus">XfasM23_1111</name>
</gene>
<comment type="function">
    <text evidence="1">Catalyzes the condensation of the acetyl group of acetyl-CoA with 3-methyl-2-oxobutanoate (2-ketoisovalerate) to form 3-carboxy-3-hydroxy-4-methylpentanoate (2-isopropylmalate).</text>
</comment>
<comment type="catalytic activity">
    <reaction evidence="1">
        <text>3-methyl-2-oxobutanoate + acetyl-CoA + H2O = (2S)-2-isopropylmalate + CoA + H(+)</text>
        <dbReference type="Rhea" id="RHEA:21524"/>
        <dbReference type="ChEBI" id="CHEBI:1178"/>
        <dbReference type="ChEBI" id="CHEBI:11851"/>
        <dbReference type="ChEBI" id="CHEBI:15377"/>
        <dbReference type="ChEBI" id="CHEBI:15378"/>
        <dbReference type="ChEBI" id="CHEBI:57287"/>
        <dbReference type="ChEBI" id="CHEBI:57288"/>
        <dbReference type="EC" id="2.3.3.13"/>
    </reaction>
</comment>
<comment type="cofactor">
    <cofactor evidence="1">
        <name>Mn(2+)</name>
        <dbReference type="ChEBI" id="CHEBI:29035"/>
    </cofactor>
</comment>
<comment type="pathway">
    <text evidence="1">Amino-acid biosynthesis; L-leucine biosynthesis; L-leucine from 3-methyl-2-oxobutanoate: step 1/4.</text>
</comment>
<comment type="subunit">
    <text evidence="1">Homodimer.</text>
</comment>
<comment type="subcellular location">
    <subcellularLocation>
        <location evidence="1">Cytoplasm</location>
    </subcellularLocation>
</comment>
<comment type="similarity">
    <text evidence="1">Belongs to the alpha-IPM synthase/homocitrate synthase family. LeuA type 1 subfamily.</text>
</comment>
<name>LEU1_XYLF2</name>
<reference key="1">
    <citation type="journal article" date="2010" name="J. Bacteriol.">
        <title>Whole genome sequences of two Xylella fastidiosa strains (M12 and M23) causing almond leaf scorch disease in California.</title>
        <authorList>
            <person name="Chen J."/>
            <person name="Xie G."/>
            <person name="Han S."/>
            <person name="Chertkov O."/>
            <person name="Sims D."/>
            <person name="Civerolo E.L."/>
        </authorList>
    </citation>
    <scope>NUCLEOTIDE SEQUENCE [LARGE SCALE GENOMIC DNA]</scope>
    <source>
        <strain>M23</strain>
    </source>
</reference>
<accession>B2I596</accession>
<feature type="chain" id="PRO_1000149337" description="2-isopropylmalate synthase">
    <location>
        <begin position="1"/>
        <end position="519"/>
    </location>
</feature>
<feature type="domain" description="Pyruvate carboxyltransferase" evidence="1">
    <location>
        <begin position="12"/>
        <end position="274"/>
    </location>
</feature>
<feature type="region of interest" description="Regulatory domain" evidence="1">
    <location>
        <begin position="396"/>
        <end position="519"/>
    </location>
</feature>
<feature type="binding site" evidence="1">
    <location>
        <position position="21"/>
    </location>
    <ligand>
        <name>Mn(2+)</name>
        <dbReference type="ChEBI" id="CHEBI:29035"/>
    </ligand>
</feature>
<feature type="binding site" evidence="1">
    <location>
        <position position="209"/>
    </location>
    <ligand>
        <name>Mn(2+)</name>
        <dbReference type="ChEBI" id="CHEBI:29035"/>
    </ligand>
</feature>
<feature type="binding site" evidence="1">
    <location>
        <position position="211"/>
    </location>
    <ligand>
        <name>Mn(2+)</name>
        <dbReference type="ChEBI" id="CHEBI:29035"/>
    </ligand>
</feature>
<feature type="binding site" evidence="1">
    <location>
        <position position="245"/>
    </location>
    <ligand>
        <name>Mn(2+)</name>
        <dbReference type="ChEBI" id="CHEBI:29035"/>
    </ligand>
</feature>
<keyword id="KW-0028">Amino-acid biosynthesis</keyword>
<keyword id="KW-0100">Branched-chain amino acid biosynthesis</keyword>
<keyword id="KW-0963">Cytoplasm</keyword>
<keyword id="KW-0432">Leucine biosynthesis</keyword>
<keyword id="KW-0464">Manganese</keyword>
<keyword id="KW-0479">Metal-binding</keyword>
<keyword id="KW-0808">Transferase</keyword>
<organism>
    <name type="scientific">Xylella fastidiosa (strain M23)</name>
    <dbReference type="NCBI Taxonomy" id="405441"/>
    <lineage>
        <taxon>Bacteria</taxon>
        <taxon>Pseudomonadati</taxon>
        <taxon>Pseudomonadota</taxon>
        <taxon>Gammaproteobacteria</taxon>
        <taxon>Lysobacterales</taxon>
        <taxon>Lysobacteraceae</taxon>
        <taxon>Xylella</taxon>
    </lineage>
</organism>